<sequence length="393" mass="42605">MAAVRRVVLIVIDSVGIGAMPDAADWGDAGANTLGNMARQRGGLPLPNLGRLGLGNLCAIEGTPPVDAPAGAYGRMAIFSHGKDTMTGHWEMVGIRPEAPFRTYPDGFPEDLIAEFCRRAGLEGVLGNKVASGTEIIKELGEEHLRTGWPIVYTSADSVFQVAAHEERFGLERLYEVCRIARDLLRPPHRVGRVIARPFVGTDRTNFTRTANRHDYALEPPRMLLDEVKDAGLSVLAVGKISDIFSGHGITYSVHTKSNADGIEKIHECLDRQEPGLIFANLVDFDMLYGHRRDVEGYARAMLEFDAALPAIMAKLGPEDVLVVTADHGNDPTYIGTDHTREYVPVLLYGEPIKPGVDVGTRASLADLGATVADLLGVPQTGFGESFADQIRK</sequence>
<comment type="function">
    <text evidence="1">Isomerase that catalyzes the conversion of deoxy-ribose 1-phosphate (dRib-1-P) and ribose 1-phosphate (Rib-1-P) to deoxy-ribose 5-phosphate (dRib-5-P) and ribose 5-phosphate (Rib-5-P), respectively.</text>
</comment>
<comment type="catalytic activity">
    <reaction evidence="1">
        <text>2-deoxy-alpha-D-ribose 1-phosphate = 2-deoxy-D-ribose 5-phosphate</text>
        <dbReference type="Rhea" id="RHEA:27658"/>
        <dbReference type="ChEBI" id="CHEBI:57259"/>
        <dbReference type="ChEBI" id="CHEBI:62877"/>
        <dbReference type="EC" id="5.4.2.7"/>
    </reaction>
</comment>
<comment type="catalytic activity">
    <reaction evidence="1">
        <text>alpha-D-ribose 1-phosphate = D-ribose 5-phosphate</text>
        <dbReference type="Rhea" id="RHEA:18793"/>
        <dbReference type="ChEBI" id="CHEBI:57720"/>
        <dbReference type="ChEBI" id="CHEBI:78346"/>
        <dbReference type="EC" id="5.4.2.7"/>
    </reaction>
</comment>
<comment type="cofactor">
    <cofactor evidence="1">
        <name>Mn(2+)</name>
        <dbReference type="ChEBI" id="CHEBI:29035"/>
    </cofactor>
    <text evidence="1">Binds 2 manganese ions.</text>
</comment>
<comment type="pathway">
    <text evidence="1">Carbohydrate degradation; 2-deoxy-D-ribose 1-phosphate degradation; D-glyceraldehyde 3-phosphate and acetaldehyde from 2-deoxy-alpha-D-ribose 1-phosphate: step 1/2.</text>
</comment>
<comment type="subcellular location">
    <subcellularLocation>
        <location evidence="1">Cytoplasm</location>
    </subcellularLocation>
</comment>
<comment type="similarity">
    <text evidence="1">Belongs to the phosphopentomutase family.</text>
</comment>
<protein>
    <recommendedName>
        <fullName evidence="1">Phosphopentomutase</fullName>
        <ecNumber evidence="1">5.4.2.7</ecNumber>
    </recommendedName>
    <alternativeName>
        <fullName evidence="1">Phosphodeoxyribomutase</fullName>
    </alternativeName>
</protein>
<accession>Q67ND8</accession>
<keyword id="KW-0963">Cytoplasm</keyword>
<keyword id="KW-0413">Isomerase</keyword>
<keyword id="KW-0464">Manganese</keyword>
<keyword id="KW-0479">Metal-binding</keyword>
<keyword id="KW-1185">Reference proteome</keyword>
<name>DEOB_SYMTH</name>
<organism>
    <name type="scientific">Symbiobacterium thermophilum (strain DSM 24528 / JCM 14929 / IAM 14863 / T)</name>
    <dbReference type="NCBI Taxonomy" id="292459"/>
    <lineage>
        <taxon>Bacteria</taxon>
        <taxon>Bacillati</taxon>
        <taxon>Bacillota</taxon>
        <taxon>Clostridia</taxon>
        <taxon>Eubacteriales</taxon>
        <taxon>Symbiobacteriaceae</taxon>
        <taxon>Symbiobacterium</taxon>
    </lineage>
</organism>
<evidence type="ECO:0000255" key="1">
    <source>
        <dbReference type="HAMAP-Rule" id="MF_00740"/>
    </source>
</evidence>
<dbReference type="EC" id="5.4.2.7" evidence="1"/>
<dbReference type="EMBL" id="AP006840">
    <property type="protein sequence ID" value="BAD40805.1"/>
    <property type="molecule type" value="Genomic_DNA"/>
</dbReference>
<dbReference type="RefSeq" id="WP_011195948.1">
    <property type="nucleotide sequence ID" value="NC_006177.1"/>
</dbReference>
<dbReference type="SMR" id="Q67ND8"/>
<dbReference type="STRING" id="292459.STH1820"/>
<dbReference type="KEGG" id="sth:STH1820"/>
<dbReference type="eggNOG" id="COG1015">
    <property type="taxonomic scope" value="Bacteria"/>
</dbReference>
<dbReference type="HOGENOM" id="CLU_053861_0_0_9"/>
<dbReference type="OrthoDB" id="9769930at2"/>
<dbReference type="UniPathway" id="UPA00002">
    <property type="reaction ID" value="UER00467"/>
</dbReference>
<dbReference type="Proteomes" id="UP000000417">
    <property type="component" value="Chromosome"/>
</dbReference>
<dbReference type="GO" id="GO:0005829">
    <property type="term" value="C:cytosol"/>
    <property type="evidence" value="ECO:0007669"/>
    <property type="project" value="TreeGrafter"/>
</dbReference>
<dbReference type="GO" id="GO:0000287">
    <property type="term" value="F:magnesium ion binding"/>
    <property type="evidence" value="ECO:0007669"/>
    <property type="project" value="InterPro"/>
</dbReference>
<dbReference type="GO" id="GO:0030145">
    <property type="term" value="F:manganese ion binding"/>
    <property type="evidence" value="ECO:0007669"/>
    <property type="project" value="UniProtKB-UniRule"/>
</dbReference>
<dbReference type="GO" id="GO:0008973">
    <property type="term" value="F:phosphopentomutase activity"/>
    <property type="evidence" value="ECO:0007669"/>
    <property type="project" value="UniProtKB-UniRule"/>
</dbReference>
<dbReference type="GO" id="GO:0006018">
    <property type="term" value="P:2-deoxyribose 1-phosphate catabolic process"/>
    <property type="evidence" value="ECO:0007669"/>
    <property type="project" value="UniProtKB-UniRule"/>
</dbReference>
<dbReference type="GO" id="GO:0006015">
    <property type="term" value="P:5-phosphoribose 1-diphosphate biosynthetic process"/>
    <property type="evidence" value="ECO:0007669"/>
    <property type="project" value="UniProtKB-UniPathway"/>
</dbReference>
<dbReference type="GO" id="GO:0043094">
    <property type="term" value="P:metabolic compound salvage"/>
    <property type="evidence" value="ECO:0007669"/>
    <property type="project" value="InterPro"/>
</dbReference>
<dbReference type="GO" id="GO:0009117">
    <property type="term" value="P:nucleotide metabolic process"/>
    <property type="evidence" value="ECO:0007669"/>
    <property type="project" value="InterPro"/>
</dbReference>
<dbReference type="CDD" id="cd16009">
    <property type="entry name" value="PPM"/>
    <property type="match status" value="1"/>
</dbReference>
<dbReference type="FunFam" id="3.30.70.1250:FF:000001">
    <property type="entry name" value="Phosphopentomutase"/>
    <property type="match status" value="1"/>
</dbReference>
<dbReference type="Gene3D" id="3.40.720.10">
    <property type="entry name" value="Alkaline Phosphatase, subunit A"/>
    <property type="match status" value="1"/>
</dbReference>
<dbReference type="Gene3D" id="3.30.70.1250">
    <property type="entry name" value="Phosphopentomutase"/>
    <property type="match status" value="1"/>
</dbReference>
<dbReference type="HAMAP" id="MF_00740">
    <property type="entry name" value="Phosphopentomut"/>
    <property type="match status" value="1"/>
</dbReference>
<dbReference type="InterPro" id="IPR017850">
    <property type="entry name" value="Alkaline_phosphatase_core_sf"/>
</dbReference>
<dbReference type="InterPro" id="IPR010045">
    <property type="entry name" value="DeoB"/>
</dbReference>
<dbReference type="InterPro" id="IPR006124">
    <property type="entry name" value="Metalloenzyme"/>
</dbReference>
<dbReference type="InterPro" id="IPR024052">
    <property type="entry name" value="Phosphopentomutase_DeoB_cap_sf"/>
</dbReference>
<dbReference type="NCBIfam" id="TIGR01696">
    <property type="entry name" value="deoB"/>
    <property type="match status" value="1"/>
</dbReference>
<dbReference type="NCBIfam" id="NF003766">
    <property type="entry name" value="PRK05362.1"/>
    <property type="match status" value="1"/>
</dbReference>
<dbReference type="PANTHER" id="PTHR21110">
    <property type="entry name" value="PHOSPHOPENTOMUTASE"/>
    <property type="match status" value="1"/>
</dbReference>
<dbReference type="PANTHER" id="PTHR21110:SF0">
    <property type="entry name" value="PHOSPHOPENTOMUTASE"/>
    <property type="match status" value="1"/>
</dbReference>
<dbReference type="Pfam" id="PF01676">
    <property type="entry name" value="Metalloenzyme"/>
    <property type="match status" value="1"/>
</dbReference>
<dbReference type="PIRSF" id="PIRSF001491">
    <property type="entry name" value="Ppentomutase"/>
    <property type="match status" value="1"/>
</dbReference>
<dbReference type="SUPFAM" id="SSF53649">
    <property type="entry name" value="Alkaline phosphatase-like"/>
    <property type="match status" value="1"/>
</dbReference>
<dbReference type="SUPFAM" id="SSF143856">
    <property type="entry name" value="DeoB insert domain-like"/>
    <property type="match status" value="1"/>
</dbReference>
<gene>
    <name evidence="1" type="primary">deoB</name>
    <name type="ordered locus">STH1820</name>
</gene>
<proteinExistence type="inferred from homology"/>
<reference key="1">
    <citation type="journal article" date="2004" name="Nucleic Acids Res.">
        <title>Genome sequence of Symbiobacterium thermophilum, an uncultivable bacterium that depends on microbial commensalism.</title>
        <authorList>
            <person name="Ueda K."/>
            <person name="Yamashita A."/>
            <person name="Ishikawa J."/>
            <person name="Shimada M."/>
            <person name="Watsuji T."/>
            <person name="Morimura K."/>
            <person name="Ikeda H."/>
            <person name="Hattori M."/>
            <person name="Beppu T."/>
        </authorList>
    </citation>
    <scope>NUCLEOTIDE SEQUENCE [LARGE SCALE GENOMIC DNA]</scope>
    <source>
        <strain>DSM 24528 / JCM 14929 / IAM 14863 / T</strain>
    </source>
</reference>
<feature type="chain" id="PRO_0000258319" description="Phosphopentomutase">
    <location>
        <begin position="1"/>
        <end position="393"/>
    </location>
</feature>
<feature type="binding site" evidence="1">
    <location>
        <position position="13"/>
    </location>
    <ligand>
        <name>Mn(2+)</name>
        <dbReference type="ChEBI" id="CHEBI:29035"/>
        <label>1</label>
    </ligand>
</feature>
<feature type="binding site" evidence="1">
    <location>
        <position position="286"/>
    </location>
    <ligand>
        <name>Mn(2+)</name>
        <dbReference type="ChEBI" id="CHEBI:29035"/>
        <label>2</label>
    </ligand>
</feature>
<feature type="binding site" evidence="1">
    <location>
        <position position="291"/>
    </location>
    <ligand>
        <name>Mn(2+)</name>
        <dbReference type="ChEBI" id="CHEBI:29035"/>
        <label>2</label>
    </ligand>
</feature>
<feature type="binding site" evidence="1">
    <location>
        <position position="327"/>
    </location>
    <ligand>
        <name>Mn(2+)</name>
        <dbReference type="ChEBI" id="CHEBI:29035"/>
        <label>1</label>
    </ligand>
</feature>
<feature type="binding site" evidence="1">
    <location>
        <position position="328"/>
    </location>
    <ligand>
        <name>Mn(2+)</name>
        <dbReference type="ChEBI" id="CHEBI:29035"/>
        <label>1</label>
    </ligand>
</feature>
<feature type="binding site" evidence="1">
    <location>
        <position position="339"/>
    </location>
    <ligand>
        <name>Mn(2+)</name>
        <dbReference type="ChEBI" id="CHEBI:29035"/>
        <label>2</label>
    </ligand>
</feature>